<protein>
    <recommendedName>
        <fullName evidence="1">Anthranilate phosphoribosyltransferase</fullName>
        <ecNumber evidence="1">2.4.2.18</ecNumber>
    </recommendedName>
</protein>
<dbReference type="EC" id="2.4.2.18" evidence="1"/>
<dbReference type="EMBL" id="CP000927">
    <property type="protein sequence ID" value="ABZ71904.1"/>
    <property type="molecule type" value="Genomic_DNA"/>
</dbReference>
<dbReference type="SMR" id="B0SYZ3"/>
<dbReference type="STRING" id="366602.Caul_2777"/>
<dbReference type="KEGG" id="cak:Caul_2777"/>
<dbReference type="eggNOG" id="COG0547">
    <property type="taxonomic scope" value="Bacteria"/>
</dbReference>
<dbReference type="HOGENOM" id="CLU_034315_2_1_5"/>
<dbReference type="OrthoDB" id="9806430at2"/>
<dbReference type="UniPathway" id="UPA00035">
    <property type="reaction ID" value="UER00041"/>
</dbReference>
<dbReference type="GO" id="GO:0005829">
    <property type="term" value="C:cytosol"/>
    <property type="evidence" value="ECO:0007669"/>
    <property type="project" value="TreeGrafter"/>
</dbReference>
<dbReference type="GO" id="GO:0004048">
    <property type="term" value="F:anthranilate phosphoribosyltransferase activity"/>
    <property type="evidence" value="ECO:0007669"/>
    <property type="project" value="UniProtKB-UniRule"/>
</dbReference>
<dbReference type="GO" id="GO:0000287">
    <property type="term" value="F:magnesium ion binding"/>
    <property type="evidence" value="ECO:0007669"/>
    <property type="project" value="UniProtKB-UniRule"/>
</dbReference>
<dbReference type="GO" id="GO:0000162">
    <property type="term" value="P:L-tryptophan biosynthetic process"/>
    <property type="evidence" value="ECO:0007669"/>
    <property type="project" value="UniProtKB-UniRule"/>
</dbReference>
<dbReference type="FunFam" id="3.40.1030.10:FF:000002">
    <property type="entry name" value="Anthranilate phosphoribosyltransferase"/>
    <property type="match status" value="1"/>
</dbReference>
<dbReference type="Gene3D" id="3.40.1030.10">
    <property type="entry name" value="Nucleoside phosphorylase/phosphoribosyltransferase catalytic domain"/>
    <property type="match status" value="1"/>
</dbReference>
<dbReference type="Gene3D" id="1.20.970.10">
    <property type="entry name" value="Transferase, Pyrimidine Nucleoside Phosphorylase, Chain C"/>
    <property type="match status" value="1"/>
</dbReference>
<dbReference type="HAMAP" id="MF_00211">
    <property type="entry name" value="TrpD"/>
    <property type="match status" value="1"/>
</dbReference>
<dbReference type="InterPro" id="IPR005940">
    <property type="entry name" value="Anthranilate_Pribosyl_Tfrase"/>
</dbReference>
<dbReference type="InterPro" id="IPR000312">
    <property type="entry name" value="Glycosyl_Trfase_fam3"/>
</dbReference>
<dbReference type="InterPro" id="IPR017459">
    <property type="entry name" value="Glycosyl_Trfase_fam3_N_dom"/>
</dbReference>
<dbReference type="InterPro" id="IPR036320">
    <property type="entry name" value="Glycosyl_Trfase_fam3_N_dom_sf"/>
</dbReference>
<dbReference type="InterPro" id="IPR035902">
    <property type="entry name" value="Nuc_phospho_transferase"/>
</dbReference>
<dbReference type="NCBIfam" id="TIGR01245">
    <property type="entry name" value="trpD"/>
    <property type="match status" value="1"/>
</dbReference>
<dbReference type="PANTHER" id="PTHR43285">
    <property type="entry name" value="ANTHRANILATE PHOSPHORIBOSYLTRANSFERASE"/>
    <property type="match status" value="1"/>
</dbReference>
<dbReference type="PANTHER" id="PTHR43285:SF2">
    <property type="entry name" value="ANTHRANILATE PHOSPHORIBOSYLTRANSFERASE"/>
    <property type="match status" value="1"/>
</dbReference>
<dbReference type="Pfam" id="PF02885">
    <property type="entry name" value="Glycos_trans_3N"/>
    <property type="match status" value="1"/>
</dbReference>
<dbReference type="Pfam" id="PF00591">
    <property type="entry name" value="Glycos_transf_3"/>
    <property type="match status" value="1"/>
</dbReference>
<dbReference type="SUPFAM" id="SSF52418">
    <property type="entry name" value="Nucleoside phosphorylase/phosphoribosyltransferase catalytic domain"/>
    <property type="match status" value="1"/>
</dbReference>
<dbReference type="SUPFAM" id="SSF47648">
    <property type="entry name" value="Nucleoside phosphorylase/phosphoribosyltransferase N-terminal domain"/>
    <property type="match status" value="1"/>
</dbReference>
<name>TRPD_CAUSK</name>
<reference key="1">
    <citation type="submission" date="2008-01" db="EMBL/GenBank/DDBJ databases">
        <title>Complete sequence of chromosome of Caulobacter sp. K31.</title>
        <authorList>
            <consortium name="US DOE Joint Genome Institute"/>
            <person name="Copeland A."/>
            <person name="Lucas S."/>
            <person name="Lapidus A."/>
            <person name="Barry K."/>
            <person name="Glavina del Rio T."/>
            <person name="Dalin E."/>
            <person name="Tice H."/>
            <person name="Pitluck S."/>
            <person name="Bruce D."/>
            <person name="Goodwin L."/>
            <person name="Thompson L.S."/>
            <person name="Brettin T."/>
            <person name="Detter J.C."/>
            <person name="Han C."/>
            <person name="Schmutz J."/>
            <person name="Larimer F."/>
            <person name="Land M."/>
            <person name="Hauser L."/>
            <person name="Kyrpides N."/>
            <person name="Kim E."/>
            <person name="Stephens C."/>
            <person name="Richardson P."/>
        </authorList>
    </citation>
    <scope>NUCLEOTIDE SEQUENCE [LARGE SCALE GENOMIC DNA]</scope>
    <source>
        <strain>K31</strain>
    </source>
</reference>
<accession>B0SYZ3</accession>
<keyword id="KW-0028">Amino-acid biosynthesis</keyword>
<keyword id="KW-0057">Aromatic amino acid biosynthesis</keyword>
<keyword id="KW-0328">Glycosyltransferase</keyword>
<keyword id="KW-0460">Magnesium</keyword>
<keyword id="KW-0479">Metal-binding</keyword>
<keyword id="KW-0808">Transferase</keyword>
<keyword id="KW-0822">Tryptophan biosynthesis</keyword>
<comment type="function">
    <text evidence="1">Catalyzes the transfer of the phosphoribosyl group of 5-phosphorylribose-1-pyrophosphate (PRPP) to anthranilate to yield N-(5'-phosphoribosyl)-anthranilate (PRA).</text>
</comment>
<comment type="catalytic activity">
    <reaction evidence="1">
        <text>N-(5-phospho-beta-D-ribosyl)anthranilate + diphosphate = 5-phospho-alpha-D-ribose 1-diphosphate + anthranilate</text>
        <dbReference type="Rhea" id="RHEA:11768"/>
        <dbReference type="ChEBI" id="CHEBI:16567"/>
        <dbReference type="ChEBI" id="CHEBI:18277"/>
        <dbReference type="ChEBI" id="CHEBI:33019"/>
        <dbReference type="ChEBI" id="CHEBI:58017"/>
        <dbReference type="EC" id="2.4.2.18"/>
    </reaction>
</comment>
<comment type="cofactor">
    <cofactor evidence="1">
        <name>Mg(2+)</name>
        <dbReference type="ChEBI" id="CHEBI:18420"/>
    </cofactor>
    <text evidence="1">Binds 2 magnesium ions per monomer.</text>
</comment>
<comment type="pathway">
    <text evidence="1">Amino-acid biosynthesis; L-tryptophan biosynthesis; L-tryptophan from chorismate: step 2/5.</text>
</comment>
<comment type="subunit">
    <text evidence="1">Homodimer.</text>
</comment>
<comment type="similarity">
    <text evidence="1">Belongs to the anthranilate phosphoribosyltransferase family.</text>
</comment>
<gene>
    <name evidence="1" type="primary">trpD</name>
    <name type="ordered locus">Caul_2777</name>
</gene>
<sequence length="347" mass="35809">MSDAFKPLLAKLADGQTLDEDDAEQFFAACLRGEPTPAQVAAAVTAMRLRGETVGEITACARAMRRAAIHLDHPYEVIDVCGTGGDGLHTLNISTAVGFVAAGGGLKVAKHGNRAITSKSGTADVLAALGVNIDASLAQQRHALDTAGICFLFAQAHHGAMKHVSPIRQQLGFRTIFNLLGPLTNPAGAKRQVVGVSAHRFVEPVAKALGALGAERAWSVHGAGMDELTTTGETEVAEWRDGSLRLFTITPEAVGLPRAALADITGGDPAYNAAALTALLDGQKGAYRDIVMLNAAAAFLVADRVETLREGVELAGAVLDDGRAKAALAGLVAATNSETVPAQVTPA</sequence>
<proteinExistence type="inferred from homology"/>
<organism>
    <name type="scientific">Caulobacter sp. (strain K31)</name>
    <dbReference type="NCBI Taxonomy" id="366602"/>
    <lineage>
        <taxon>Bacteria</taxon>
        <taxon>Pseudomonadati</taxon>
        <taxon>Pseudomonadota</taxon>
        <taxon>Alphaproteobacteria</taxon>
        <taxon>Caulobacterales</taxon>
        <taxon>Caulobacteraceae</taxon>
        <taxon>Caulobacter</taxon>
    </lineage>
</organism>
<evidence type="ECO:0000255" key="1">
    <source>
        <dbReference type="HAMAP-Rule" id="MF_00211"/>
    </source>
</evidence>
<feature type="chain" id="PRO_1000078008" description="Anthranilate phosphoribosyltransferase">
    <location>
        <begin position="1"/>
        <end position="347"/>
    </location>
</feature>
<feature type="binding site" evidence="1">
    <location>
        <position position="82"/>
    </location>
    <ligand>
        <name>5-phospho-alpha-D-ribose 1-diphosphate</name>
        <dbReference type="ChEBI" id="CHEBI:58017"/>
    </ligand>
</feature>
<feature type="binding site" evidence="1">
    <location>
        <position position="82"/>
    </location>
    <ligand>
        <name>anthranilate</name>
        <dbReference type="ChEBI" id="CHEBI:16567"/>
        <label>1</label>
    </ligand>
</feature>
<feature type="binding site" evidence="1">
    <location>
        <begin position="85"/>
        <end position="86"/>
    </location>
    <ligand>
        <name>5-phospho-alpha-D-ribose 1-diphosphate</name>
        <dbReference type="ChEBI" id="CHEBI:58017"/>
    </ligand>
</feature>
<feature type="binding site" evidence="1">
    <location>
        <position position="90"/>
    </location>
    <ligand>
        <name>5-phospho-alpha-D-ribose 1-diphosphate</name>
        <dbReference type="ChEBI" id="CHEBI:58017"/>
    </ligand>
</feature>
<feature type="binding site" evidence="1">
    <location>
        <begin position="92"/>
        <end position="95"/>
    </location>
    <ligand>
        <name>5-phospho-alpha-D-ribose 1-diphosphate</name>
        <dbReference type="ChEBI" id="CHEBI:58017"/>
    </ligand>
</feature>
<feature type="binding site" evidence="1">
    <location>
        <position position="94"/>
    </location>
    <ligand>
        <name>Mg(2+)</name>
        <dbReference type="ChEBI" id="CHEBI:18420"/>
        <label>1</label>
    </ligand>
</feature>
<feature type="binding site" evidence="1">
    <location>
        <begin position="110"/>
        <end position="118"/>
    </location>
    <ligand>
        <name>5-phospho-alpha-D-ribose 1-diphosphate</name>
        <dbReference type="ChEBI" id="CHEBI:58017"/>
    </ligand>
</feature>
<feature type="binding site" evidence="1">
    <location>
        <position position="113"/>
    </location>
    <ligand>
        <name>anthranilate</name>
        <dbReference type="ChEBI" id="CHEBI:16567"/>
        <label>1</label>
    </ligand>
</feature>
<feature type="binding site" evidence="1">
    <location>
        <position position="122"/>
    </location>
    <ligand>
        <name>5-phospho-alpha-D-ribose 1-diphosphate</name>
        <dbReference type="ChEBI" id="CHEBI:58017"/>
    </ligand>
</feature>
<feature type="binding site" evidence="1">
    <location>
        <position position="168"/>
    </location>
    <ligand>
        <name>anthranilate</name>
        <dbReference type="ChEBI" id="CHEBI:16567"/>
        <label>2</label>
    </ligand>
</feature>
<feature type="binding site" evidence="1">
    <location>
        <position position="226"/>
    </location>
    <ligand>
        <name>Mg(2+)</name>
        <dbReference type="ChEBI" id="CHEBI:18420"/>
        <label>2</label>
    </ligand>
</feature>
<feature type="binding site" evidence="1">
    <location>
        <position position="227"/>
    </location>
    <ligand>
        <name>Mg(2+)</name>
        <dbReference type="ChEBI" id="CHEBI:18420"/>
        <label>1</label>
    </ligand>
</feature>
<feature type="binding site" evidence="1">
    <location>
        <position position="227"/>
    </location>
    <ligand>
        <name>Mg(2+)</name>
        <dbReference type="ChEBI" id="CHEBI:18420"/>
        <label>2</label>
    </ligand>
</feature>